<organism>
    <name type="scientific">Xanthobacter autotrophicus (strain ATCC BAA-1158 / Py2)</name>
    <dbReference type="NCBI Taxonomy" id="78245"/>
    <lineage>
        <taxon>Bacteria</taxon>
        <taxon>Pseudomonadati</taxon>
        <taxon>Pseudomonadota</taxon>
        <taxon>Alphaproteobacteria</taxon>
        <taxon>Hyphomicrobiales</taxon>
        <taxon>Xanthobacteraceae</taxon>
        <taxon>Xanthobacter</taxon>
    </lineage>
</organism>
<keyword id="KW-1185">Reference proteome</keyword>
<keyword id="KW-0678">Repressor</keyword>
<keyword id="KW-0687">Ribonucleoprotein</keyword>
<keyword id="KW-0689">Ribosomal protein</keyword>
<keyword id="KW-0694">RNA-binding</keyword>
<keyword id="KW-0699">rRNA-binding</keyword>
<keyword id="KW-0810">Translation regulation</keyword>
<keyword id="KW-0820">tRNA-binding</keyword>
<reference key="1">
    <citation type="submission" date="2007-07" db="EMBL/GenBank/DDBJ databases">
        <title>Complete sequence of chromosome of Xanthobacter autotrophicus Py2.</title>
        <authorList>
            <consortium name="US DOE Joint Genome Institute"/>
            <person name="Copeland A."/>
            <person name="Lucas S."/>
            <person name="Lapidus A."/>
            <person name="Barry K."/>
            <person name="Glavina del Rio T."/>
            <person name="Hammon N."/>
            <person name="Israni S."/>
            <person name="Dalin E."/>
            <person name="Tice H."/>
            <person name="Pitluck S."/>
            <person name="Sims D."/>
            <person name="Brettin T."/>
            <person name="Bruce D."/>
            <person name="Detter J.C."/>
            <person name="Han C."/>
            <person name="Tapia R."/>
            <person name="Brainard J."/>
            <person name="Schmutz J."/>
            <person name="Larimer F."/>
            <person name="Land M."/>
            <person name="Hauser L."/>
            <person name="Kyrpides N."/>
            <person name="Kim E."/>
            <person name="Ensigns S.A."/>
            <person name="Richardson P."/>
        </authorList>
    </citation>
    <scope>NUCLEOTIDE SEQUENCE [LARGE SCALE GENOMIC DNA]</scope>
    <source>
        <strain>ATCC BAA-1158 / Py2</strain>
    </source>
</reference>
<accession>A7IKP7</accession>
<protein>
    <recommendedName>
        <fullName evidence="1">Large ribosomal subunit protein uL1</fullName>
    </recommendedName>
    <alternativeName>
        <fullName evidence="2">50S ribosomal protein L1</fullName>
    </alternativeName>
</protein>
<feature type="chain" id="PRO_1000141483" description="Large ribosomal subunit protein uL1">
    <location>
        <begin position="1"/>
        <end position="232"/>
    </location>
</feature>
<sequence>MAKQGKRIRAVNEGIDRVKLYPLDEALALLKERTTAKFDETIEVALNLGVDPRHADQMVRGVCNLPNGSGRTVRVAVFARGAKADEAKAAGADIVGAEDLLETIQGGTIEFDRCIATPDLMPLVGRLGKVLGPRGLMPNPKVGTVTMDVKGAVAAAKGGAVEFRVEKAGIIHGGIGKASFPADKLAENIRAFVDAVVKAKPAGAKGTYLQRVAVSSTMGPGIKVEPATVHTA</sequence>
<dbReference type="EMBL" id="CP000781">
    <property type="protein sequence ID" value="ABS68590.1"/>
    <property type="molecule type" value="Genomic_DNA"/>
</dbReference>
<dbReference type="SMR" id="A7IKP7"/>
<dbReference type="STRING" id="78245.Xaut_3361"/>
<dbReference type="KEGG" id="xau:Xaut_3361"/>
<dbReference type="eggNOG" id="COG0081">
    <property type="taxonomic scope" value="Bacteria"/>
</dbReference>
<dbReference type="HOGENOM" id="CLU_062853_0_0_5"/>
<dbReference type="OrthoDB" id="9803740at2"/>
<dbReference type="PhylomeDB" id="A7IKP7"/>
<dbReference type="Proteomes" id="UP000002417">
    <property type="component" value="Chromosome"/>
</dbReference>
<dbReference type="GO" id="GO:0022625">
    <property type="term" value="C:cytosolic large ribosomal subunit"/>
    <property type="evidence" value="ECO:0007669"/>
    <property type="project" value="TreeGrafter"/>
</dbReference>
<dbReference type="GO" id="GO:0019843">
    <property type="term" value="F:rRNA binding"/>
    <property type="evidence" value="ECO:0007669"/>
    <property type="project" value="UniProtKB-UniRule"/>
</dbReference>
<dbReference type="GO" id="GO:0003735">
    <property type="term" value="F:structural constituent of ribosome"/>
    <property type="evidence" value="ECO:0007669"/>
    <property type="project" value="InterPro"/>
</dbReference>
<dbReference type="GO" id="GO:0000049">
    <property type="term" value="F:tRNA binding"/>
    <property type="evidence" value="ECO:0007669"/>
    <property type="project" value="UniProtKB-KW"/>
</dbReference>
<dbReference type="GO" id="GO:0006417">
    <property type="term" value="P:regulation of translation"/>
    <property type="evidence" value="ECO:0007669"/>
    <property type="project" value="UniProtKB-KW"/>
</dbReference>
<dbReference type="GO" id="GO:0006412">
    <property type="term" value="P:translation"/>
    <property type="evidence" value="ECO:0007669"/>
    <property type="project" value="UniProtKB-UniRule"/>
</dbReference>
<dbReference type="CDD" id="cd00403">
    <property type="entry name" value="Ribosomal_L1"/>
    <property type="match status" value="1"/>
</dbReference>
<dbReference type="FunFam" id="3.40.50.790:FF:000001">
    <property type="entry name" value="50S ribosomal protein L1"/>
    <property type="match status" value="1"/>
</dbReference>
<dbReference type="Gene3D" id="3.30.190.20">
    <property type="match status" value="1"/>
</dbReference>
<dbReference type="Gene3D" id="3.40.50.790">
    <property type="match status" value="1"/>
</dbReference>
<dbReference type="HAMAP" id="MF_01318_B">
    <property type="entry name" value="Ribosomal_uL1_B"/>
    <property type="match status" value="1"/>
</dbReference>
<dbReference type="InterPro" id="IPR005878">
    <property type="entry name" value="Ribosom_uL1_bac-type"/>
</dbReference>
<dbReference type="InterPro" id="IPR002143">
    <property type="entry name" value="Ribosomal_uL1"/>
</dbReference>
<dbReference type="InterPro" id="IPR023674">
    <property type="entry name" value="Ribosomal_uL1-like"/>
</dbReference>
<dbReference type="InterPro" id="IPR028364">
    <property type="entry name" value="Ribosomal_uL1/biogenesis"/>
</dbReference>
<dbReference type="InterPro" id="IPR016095">
    <property type="entry name" value="Ribosomal_uL1_3-a/b-sand"/>
</dbReference>
<dbReference type="InterPro" id="IPR023673">
    <property type="entry name" value="Ribosomal_uL1_CS"/>
</dbReference>
<dbReference type="NCBIfam" id="TIGR01169">
    <property type="entry name" value="rplA_bact"/>
    <property type="match status" value="1"/>
</dbReference>
<dbReference type="PANTHER" id="PTHR36427">
    <property type="entry name" value="54S RIBOSOMAL PROTEIN L1, MITOCHONDRIAL"/>
    <property type="match status" value="1"/>
</dbReference>
<dbReference type="PANTHER" id="PTHR36427:SF3">
    <property type="entry name" value="LARGE RIBOSOMAL SUBUNIT PROTEIN UL1M"/>
    <property type="match status" value="1"/>
</dbReference>
<dbReference type="Pfam" id="PF00687">
    <property type="entry name" value="Ribosomal_L1"/>
    <property type="match status" value="1"/>
</dbReference>
<dbReference type="PIRSF" id="PIRSF002155">
    <property type="entry name" value="Ribosomal_L1"/>
    <property type="match status" value="1"/>
</dbReference>
<dbReference type="SUPFAM" id="SSF56808">
    <property type="entry name" value="Ribosomal protein L1"/>
    <property type="match status" value="1"/>
</dbReference>
<dbReference type="PROSITE" id="PS01199">
    <property type="entry name" value="RIBOSOMAL_L1"/>
    <property type="match status" value="1"/>
</dbReference>
<proteinExistence type="inferred from homology"/>
<gene>
    <name evidence="1" type="primary">rplA</name>
    <name type="ordered locus">Xaut_3361</name>
</gene>
<evidence type="ECO:0000255" key="1">
    <source>
        <dbReference type="HAMAP-Rule" id="MF_01318"/>
    </source>
</evidence>
<evidence type="ECO:0000305" key="2"/>
<comment type="function">
    <text evidence="1">Binds directly to 23S rRNA. The L1 stalk is quite mobile in the ribosome, and is involved in E site tRNA release.</text>
</comment>
<comment type="function">
    <text evidence="1">Protein L1 is also a translational repressor protein, it controls the translation of the L11 operon by binding to its mRNA.</text>
</comment>
<comment type="subunit">
    <text evidence="1">Part of the 50S ribosomal subunit.</text>
</comment>
<comment type="similarity">
    <text evidence="1">Belongs to the universal ribosomal protein uL1 family.</text>
</comment>
<name>RL1_XANP2</name>